<comment type="function">
    <text evidence="2 3 9">Essential component of the Ost-alpha/Ost-beta complex, a heterodimer that acts as the intestinal basolateral transporter responsible for bile acid export from enterocytes into portal blood (PubMed:16317684). Efficiently transports the major species of bile acids (taurocholate) (PubMed:16317684). Taurine conjugates are transported more efficiently across the basolateral membrane than glycine-conjugated bile acids (By similarity). Can also transport steroids such as estrone 3-sulfate and dehydroepiandrosterone 3-sulfate, therefore playing a role in the enterohepatic circulation of sterols (PubMed:16317684). Able to transport eicosanoids such as prostaglandin E2 (By similarity).</text>
</comment>
<comment type="catalytic activity">
    <reaction evidence="9">
        <text>taurocholate(out) = taurocholate(in)</text>
        <dbReference type="Rhea" id="RHEA:71703"/>
        <dbReference type="ChEBI" id="CHEBI:36257"/>
    </reaction>
</comment>
<comment type="catalytic activity">
    <reaction evidence="9">
        <text>estrone 3-sulfate(out) = estrone 3-sulfate(in)</text>
        <dbReference type="Rhea" id="RHEA:71835"/>
        <dbReference type="ChEBI" id="CHEBI:60050"/>
    </reaction>
</comment>
<comment type="catalytic activity">
    <reaction evidence="9">
        <text>dehydroepiandrosterone 3-sulfate(out) = dehydroepiandrosterone 3-sulfate(in)</text>
        <dbReference type="Rhea" id="RHEA:71839"/>
        <dbReference type="ChEBI" id="CHEBI:57905"/>
    </reaction>
</comment>
<comment type="catalytic activity">
    <reaction evidence="2">
        <text>tauroursodeoxycholate(out) = tauroursodeoxycholate(in)</text>
        <dbReference type="Rhea" id="RHEA:71843"/>
        <dbReference type="ChEBI" id="CHEBI:132028"/>
    </reaction>
</comment>
<comment type="catalytic activity">
    <reaction evidence="2">
        <text>glycoursodeoxycholate(out) = glycoursodeoxycholate(in)</text>
        <dbReference type="Rhea" id="RHEA:71847"/>
        <dbReference type="ChEBI" id="CHEBI:132030"/>
    </reaction>
</comment>
<comment type="catalytic activity">
    <reaction evidence="2">
        <text>glycocholate(out) = glycocholate(in)</text>
        <dbReference type="Rhea" id="RHEA:71851"/>
        <dbReference type="ChEBI" id="CHEBI:29746"/>
    </reaction>
</comment>
<comment type="catalytic activity">
    <reaction evidence="2">
        <text>taurochenodeoxycholate(out) = taurochenodeoxycholate(in)</text>
        <dbReference type="Rhea" id="RHEA:71855"/>
        <dbReference type="ChEBI" id="CHEBI:9407"/>
    </reaction>
</comment>
<comment type="catalytic activity">
    <reaction evidence="2">
        <text>glycochenodeoxycholate(out) = glycochenodeoxycholate(in)</text>
        <dbReference type="Rhea" id="RHEA:71859"/>
        <dbReference type="ChEBI" id="CHEBI:36252"/>
    </reaction>
</comment>
<comment type="catalytic activity">
    <reaction evidence="2">
        <text>taurodeoxycholate(out) = taurodeoxycholate(in)</text>
        <dbReference type="Rhea" id="RHEA:71863"/>
        <dbReference type="ChEBI" id="CHEBI:36261"/>
    </reaction>
</comment>
<comment type="catalytic activity">
    <reaction evidence="2">
        <text>glycodeoxycholate(out) = glycodeoxycholate(in)</text>
        <dbReference type="Rhea" id="RHEA:71867"/>
        <dbReference type="ChEBI" id="CHEBI:82982"/>
    </reaction>
</comment>
<comment type="catalytic activity">
    <reaction evidence="3">
        <text>prostaglandin E2(out) = prostaglandin E2(in)</text>
        <dbReference type="Rhea" id="RHEA:50984"/>
        <dbReference type="ChEBI" id="CHEBI:606564"/>
    </reaction>
</comment>
<comment type="subunit">
    <text evidence="1">Interacts with SLC51B. The Ost-alpha/Ost-beta complex is a heterodimer composed of alpha (SLC51A) and beta (SLC51B) subunit (By similarity).</text>
</comment>
<comment type="interaction">
    <interactant intactId="EBI-945738">
        <id>Q86UW1</id>
    </interactant>
    <interactant intactId="EBI-930964">
        <id>P54253</id>
        <label>ATXN1</label>
    </interactant>
    <organismsDiffer>false</organismsDiffer>
    <experiments>7</experiments>
</comment>
<comment type="interaction">
    <interactant intactId="EBI-945738">
        <id>Q86UW1</id>
    </interactant>
    <interactant intactId="EBI-8639143">
        <id>Q96LL9</id>
        <label>DNAJC30</label>
    </interactant>
    <organismsDiffer>false</organismsDiffer>
    <experiments>3</experiments>
</comment>
<comment type="subcellular location">
    <subcellularLocation>
        <location evidence="9">Cell membrane</location>
        <topology>Multi-pass membrane protein</topology>
    </subcellularLocation>
    <subcellularLocation>
        <location evidence="1">Endoplasmic reticulum membrane</location>
        <topology evidence="1">Multi-pass membrane protein</topology>
    </subcellularLocation>
    <text evidence="1">Transported from the endoplasmic reticulum to the plasma membrane upon interacting with SLC51B (By similarity). Mainly restricted to the lateral and basal membranes of ileal enterocytes.</text>
</comment>
<comment type="tissue specificity">
    <text evidence="5 9">Widely expressed with a high expression in ileum. Expressed in testis, colon, liver, small intestine, kidney, ovary and adrenal gland; and at low levels in heart, lung, brain, pituitary, thyroid gland, uterus, prostate, mammary gland and fat.</text>
</comment>
<comment type="induction">
    <text evidence="7 8">Positively regulated via NR1H4/FXR in adrenal gland, kidney and intestine.</text>
</comment>
<comment type="disease" evidence="10">
    <disease id="DI-06201">
        <name>Cholestasis, progressive familial intrahepatic, 6</name>
        <acronym>PFIC6</acronym>
        <description>An autosomal recessive form of progressive cholestasis, a disorder characterized by early onset of cholestasis that progresses to hepatic fibrosis, cirrhosis, and end-stage liver disease. PFIC6 patients have elevated liver transaminases and congenital diarrhea.</description>
        <dbReference type="MIM" id="619484"/>
    </disease>
    <text>The disease is caused by variants affecting the gene represented in this entry.</text>
</comment>
<comment type="similarity">
    <text evidence="12">Belongs to the OST-alpha family.</text>
</comment>
<keyword id="KW-1003">Cell membrane</keyword>
<keyword id="KW-0225">Disease variant</keyword>
<keyword id="KW-0256">Endoplasmic reticulum</keyword>
<keyword id="KW-0988">Intrahepatic cholestasis</keyword>
<keyword id="KW-0445">Lipid transport</keyword>
<keyword id="KW-0472">Membrane</keyword>
<keyword id="KW-0597">Phosphoprotein</keyword>
<keyword id="KW-1267">Proteomics identification</keyword>
<keyword id="KW-1185">Reference proteome</keyword>
<keyword id="KW-0812">Transmembrane</keyword>
<keyword id="KW-1133">Transmembrane helix</keyword>
<keyword id="KW-0813">Transport</keyword>
<organism>
    <name type="scientific">Homo sapiens</name>
    <name type="common">Human</name>
    <dbReference type="NCBI Taxonomy" id="9606"/>
    <lineage>
        <taxon>Eukaryota</taxon>
        <taxon>Metazoa</taxon>
        <taxon>Chordata</taxon>
        <taxon>Craniata</taxon>
        <taxon>Vertebrata</taxon>
        <taxon>Euteleostomi</taxon>
        <taxon>Mammalia</taxon>
        <taxon>Eutheria</taxon>
        <taxon>Euarchontoglires</taxon>
        <taxon>Primates</taxon>
        <taxon>Haplorrhini</taxon>
        <taxon>Catarrhini</taxon>
        <taxon>Hominidae</taxon>
        <taxon>Homo</taxon>
    </lineage>
</organism>
<reference key="1">
    <citation type="journal article" date="2003" name="J. Biol. Chem.">
        <title>Functional complementation between a novel mammalian polygenic transport complex and an evolutionarily ancient organic solute transporter, OSTalpha-OSTbeta.</title>
        <authorList>
            <person name="Seward D.J."/>
            <person name="Koh A.S."/>
            <person name="Boyer J.L."/>
            <person name="Ballatori N."/>
        </authorList>
    </citation>
    <scope>NUCLEOTIDE SEQUENCE [MRNA]</scope>
    <scope>SUBCELLULAR LOCATION</scope>
    <scope>TISSUE SPECIFICITY</scope>
    <source>
        <tissue>Liver</tissue>
    </source>
</reference>
<reference key="2">
    <citation type="journal article" date="2004" name="Nat. Genet.">
        <title>Complete sequencing and characterization of 21,243 full-length human cDNAs.</title>
        <authorList>
            <person name="Ota T."/>
            <person name="Suzuki Y."/>
            <person name="Nishikawa T."/>
            <person name="Otsuki T."/>
            <person name="Sugiyama T."/>
            <person name="Irie R."/>
            <person name="Wakamatsu A."/>
            <person name="Hayashi K."/>
            <person name="Sato H."/>
            <person name="Nagai K."/>
            <person name="Kimura K."/>
            <person name="Makita H."/>
            <person name="Sekine M."/>
            <person name="Obayashi M."/>
            <person name="Nishi T."/>
            <person name="Shibahara T."/>
            <person name="Tanaka T."/>
            <person name="Ishii S."/>
            <person name="Yamamoto J."/>
            <person name="Saito K."/>
            <person name="Kawai Y."/>
            <person name="Isono Y."/>
            <person name="Nakamura Y."/>
            <person name="Nagahari K."/>
            <person name="Murakami K."/>
            <person name="Yasuda T."/>
            <person name="Iwayanagi T."/>
            <person name="Wagatsuma M."/>
            <person name="Shiratori A."/>
            <person name="Sudo H."/>
            <person name="Hosoiri T."/>
            <person name="Kaku Y."/>
            <person name="Kodaira H."/>
            <person name="Kondo H."/>
            <person name="Sugawara M."/>
            <person name="Takahashi M."/>
            <person name="Kanda K."/>
            <person name="Yokoi T."/>
            <person name="Furuya T."/>
            <person name="Kikkawa E."/>
            <person name="Omura Y."/>
            <person name="Abe K."/>
            <person name="Kamihara K."/>
            <person name="Katsuta N."/>
            <person name="Sato K."/>
            <person name="Tanikawa M."/>
            <person name="Yamazaki M."/>
            <person name="Ninomiya K."/>
            <person name="Ishibashi T."/>
            <person name="Yamashita H."/>
            <person name="Murakawa K."/>
            <person name="Fujimori K."/>
            <person name="Tanai H."/>
            <person name="Kimata M."/>
            <person name="Watanabe M."/>
            <person name="Hiraoka S."/>
            <person name="Chiba Y."/>
            <person name="Ishida S."/>
            <person name="Ono Y."/>
            <person name="Takiguchi S."/>
            <person name="Watanabe S."/>
            <person name="Yosida M."/>
            <person name="Hotuta T."/>
            <person name="Kusano J."/>
            <person name="Kanehori K."/>
            <person name="Takahashi-Fujii A."/>
            <person name="Hara H."/>
            <person name="Tanase T.-O."/>
            <person name="Nomura Y."/>
            <person name="Togiya S."/>
            <person name="Komai F."/>
            <person name="Hara R."/>
            <person name="Takeuchi K."/>
            <person name="Arita M."/>
            <person name="Imose N."/>
            <person name="Musashino K."/>
            <person name="Yuuki H."/>
            <person name="Oshima A."/>
            <person name="Sasaki N."/>
            <person name="Aotsuka S."/>
            <person name="Yoshikawa Y."/>
            <person name="Matsunawa H."/>
            <person name="Ichihara T."/>
            <person name="Shiohata N."/>
            <person name="Sano S."/>
            <person name="Moriya S."/>
            <person name="Momiyama H."/>
            <person name="Satoh N."/>
            <person name="Takami S."/>
            <person name="Terashima Y."/>
            <person name="Suzuki O."/>
            <person name="Nakagawa S."/>
            <person name="Senoh A."/>
            <person name="Mizoguchi H."/>
            <person name="Goto Y."/>
            <person name="Shimizu F."/>
            <person name="Wakebe H."/>
            <person name="Hishigaki H."/>
            <person name="Watanabe T."/>
            <person name="Sugiyama A."/>
            <person name="Takemoto M."/>
            <person name="Kawakami B."/>
            <person name="Yamazaki M."/>
            <person name="Watanabe K."/>
            <person name="Kumagai A."/>
            <person name="Itakura S."/>
            <person name="Fukuzumi Y."/>
            <person name="Fujimori Y."/>
            <person name="Komiyama M."/>
            <person name="Tashiro H."/>
            <person name="Tanigami A."/>
            <person name="Fujiwara T."/>
            <person name="Ono T."/>
            <person name="Yamada K."/>
            <person name="Fujii Y."/>
            <person name="Ozaki K."/>
            <person name="Hirao M."/>
            <person name="Ohmori Y."/>
            <person name="Kawabata A."/>
            <person name="Hikiji T."/>
            <person name="Kobatake N."/>
            <person name="Inagaki H."/>
            <person name="Ikema Y."/>
            <person name="Okamoto S."/>
            <person name="Okitani R."/>
            <person name="Kawakami T."/>
            <person name="Noguchi S."/>
            <person name="Itoh T."/>
            <person name="Shigeta K."/>
            <person name="Senba T."/>
            <person name="Matsumura K."/>
            <person name="Nakajima Y."/>
            <person name="Mizuno T."/>
            <person name="Morinaga M."/>
            <person name="Sasaki M."/>
            <person name="Togashi T."/>
            <person name="Oyama M."/>
            <person name="Hata H."/>
            <person name="Watanabe M."/>
            <person name="Komatsu T."/>
            <person name="Mizushima-Sugano J."/>
            <person name="Satoh T."/>
            <person name="Shirai Y."/>
            <person name="Takahashi Y."/>
            <person name="Nakagawa K."/>
            <person name="Okumura K."/>
            <person name="Nagase T."/>
            <person name="Nomura N."/>
            <person name="Kikuchi H."/>
            <person name="Masuho Y."/>
            <person name="Yamashita R."/>
            <person name="Nakai K."/>
            <person name="Yada T."/>
            <person name="Nakamura Y."/>
            <person name="Ohara O."/>
            <person name="Isogai T."/>
            <person name="Sugano S."/>
        </authorList>
    </citation>
    <scope>NUCLEOTIDE SEQUENCE [LARGE SCALE MRNA]</scope>
    <scope>VARIANT ILE-202</scope>
    <source>
        <tissue>Small intestine</tissue>
    </source>
</reference>
<reference key="3">
    <citation type="submission" date="2005-09" db="EMBL/GenBank/DDBJ databases">
        <authorList>
            <person name="Mural R.J."/>
            <person name="Istrail S."/>
            <person name="Sutton G.G."/>
            <person name="Florea L."/>
            <person name="Halpern A.L."/>
            <person name="Mobarry C.M."/>
            <person name="Lippert R."/>
            <person name="Walenz B."/>
            <person name="Shatkay H."/>
            <person name="Dew I."/>
            <person name="Miller J.R."/>
            <person name="Flanigan M.J."/>
            <person name="Edwards N.J."/>
            <person name="Bolanos R."/>
            <person name="Fasulo D."/>
            <person name="Halldorsson B.V."/>
            <person name="Hannenhalli S."/>
            <person name="Turner R."/>
            <person name="Yooseph S."/>
            <person name="Lu F."/>
            <person name="Nusskern D.R."/>
            <person name="Shue B.C."/>
            <person name="Zheng X.H."/>
            <person name="Zhong F."/>
            <person name="Delcher A.L."/>
            <person name="Huson D.H."/>
            <person name="Kravitz S.A."/>
            <person name="Mouchard L."/>
            <person name="Reinert K."/>
            <person name="Remington K.A."/>
            <person name="Clark A.G."/>
            <person name="Waterman M.S."/>
            <person name="Eichler E.E."/>
            <person name="Adams M.D."/>
            <person name="Hunkapiller M.W."/>
            <person name="Myers E.W."/>
            <person name="Venter J.C."/>
        </authorList>
    </citation>
    <scope>NUCLEOTIDE SEQUENCE [LARGE SCALE GENOMIC DNA]</scope>
</reference>
<reference key="4">
    <citation type="journal article" date="2005" name="Hepatology">
        <title>OSTalpha-OSTbeta: a major basolateral bile acid and steroid transporter in human intestinal, renal, and biliary epithelia.</title>
        <authorList>
            <person name="Ballatori N."/>
            <person name="Christian W.V."/>
            <person name="Lee J.Y."/>
            <person name="Dawson P.A."/>
            <person name="Soroka C.J."/>
            <person name="Boyer J.L."/>
            <person name="Madejczyk M.S."/>
            <person name="Li N."/>
        </authorList>
    </citation>
    <scope>FUNCTION</scope>
    <scope>SUBCELLULAR LOCATION</scope>
    <scope>TISSUE SPECIFICITY</scope>
    <scope>TRANSPORT ACTIVITY</scope>
</reference>
<reference key="5">
    <citation type="journal article" date="2006" name="Am. J. Physiol.">
        <title>The nuclear receptor for bile acids, FXR, transactivates human organic solute transporter-alpha and -beta genes.</title>
        <authorList>
            <person name="Landrier J.-F."/>
            <person name="Eloranta J.J."/>
            <person name="Vavricka S.R."/>
            <person name="Kullak-Ublick G.A."/>
        </authorList>
    </citation>
    <scope>INDUCTION BY NR1H4</scope>
</reference>
<reference key="6">
    <citation type="journal article" date="2006" name="J. Lipid Res.">
        <title>FXR regulates organic solute transporters alpha and beta in the adrenal gland, kidney, and intestine.</title>
        <authorList>
            <person name="Lee H."/>
            <person name="Zhang Y."/>
            <person name="Lee F.Y."/>
            <person name="Nelson S.F."/>
            <person name="Gonzalez F.J."/>
            <person name="Edwards P.A."/>
        </authorList>
    </citation>
    <scope>INDUCTION BY NR1H4</scope>
</reference>
<reference key="7">
    <citation type="journal article" date="2020" name="Hepatology">
        <title>Organic solute transporter alpha deficiency: A disorder with cholestasis, liver fibrosis, and congenital diarrhea.</title>
        <authorList>
            <person name="Gao E."/>
            <person name="Cheema H."/>
            <person name="Waheed N."/>
            <person name="Mushtaq I."/>
            <person name="Erden N."/>
            <person name="Nelson-Williams C."/>
            <person name="Jain D."/>
            <person name="Soroka C.J."/>
            <person name="Boyer J.L."/>
            <person name="Khalil Y."/>
            <person name="Clayton P.T."/>
            <person name="Mistry P.K."/>
            <person name="Lifton R.P."/>
            <person name="Vilarinho S."/>
        </authorList>
    </citation>
    <scope>VARIANT PFIC6 186-GLN--ALA-340 DEL</scope>
    <scope>INVOLVEMENT IN PFIC6</scope>
</reference>
<gene>
    <name type="primary">SLC51A</name>
    <name type="synonym">OSTA</name>
</gene>
<name>OSTA_HUMAN</name>
<accession>Q86UW1</accession>
<accession>Q6ZMC7</accession>
<dbReference type="EMBL" id="AY194243">
    <property type="protein sequence ID" value="AAP23993.1"/>
    <property type="molecule type" value="mRNA"/>
</dbReference>
<dbReference type="EMBL" id="AK172837">
    <property type="protein sequence ID" value="BAD18802.1"/>
    <property type="molecule type" value="mRNA"/>
</dbReference>
<dbReference type="EMBL" id="CH471191">
    <property type="protein sequence ID" value="EAW53665.1"/>
    <property type="molecule type" value="Genomic_DNA"/>
</dbReference>
<dbReference type="CCDS" id="CCDS3314.1"/>
<dbReference type="RefSeq" id="NP_689885.4">
    <property type="nucleotide sequence ID" value="NM_152672.5"/>
</dbReference>
<dbReference type="SMR" id="Q86UW1"/>
<dbReference type="BioGRID" id="128357">
    <property type="interactions" value="7"/>
</dbReference>
<dbReference type="FunCoup" id="Q86UW1">
    <property type="interactions" value="35"/>
</dbReference>
<dbReference type="IntAct" id="Q86UW1">
    <property type="interactions" value="7"/>
</dbReference>
<dbReference type="STRING" id="9606.ENSP00000296327"/>
<dbReference type="ChEMBL" id="CHEMBL2073724"/>
<dbReference type="DrugBank" id="DB00286">
    <property type="generic name" value="Conjugated estrogens"/>
</dbReference>
<dbReference type="DrugBank" id="DB00390">
    <property type="generic name" value="Digoxin"/>
</dbReference>
<dbReference type="DrugBank" id="DB00917">
    <property type="generic name" value="Dinoprostone"/>
</dbReference>
<dbReference type="DrugBank" id="DB04348">
    <property type="generic name" value="Taurocholic acid"/>
</dbReference>
<dbReference type="TCDB" id="2.A.82.1.2">
    <property type="family name" value="the organic solute transporter (ost) family"/>
</dbReference>
<dbReference type="GlyCosmos" id="Q86UW1">
    <property type="glycosylation" value="2 sites, 1 glycan"/>
</dbReference>
<dbReference type="GlyGen" id="Q86UW1">
    <property type="glycosylation" value="2 sites, 1 O-linked glycan (2 sites)"/>
</dbReference>
<dbReference type="iPTMnet" id="Q86UW1"/>
<dbReference type="PhosphoSitePlus" id="Q86UW1"/>
<dbReference type="BioMuta" id="SLC51A"/>
<dbReference type="jPOST" id="Q86UW1"/>
<dbReference type="MassIVE" id="Q86UW1"/>
<dbReference type="PaxDb" id="9606-ENSP00000296327"/>
<dbReference type="PeptideAtlas" id="Q86UW1"/>
<dbReference type="Antibodypedia" id="46863">
    <property type="antibodies" value="100 antibodies from 17 providers"/>
</dbReference>
<dbReference type="DNASU" id="200931"/>
<dbReference type="Ensembl" id="ENST00000296327.10">
    <property type="protein sequence ID" value="ENSP00000296327.5"/>
    <property type="gene ID" value="ENSG00000163959.10"/>
</dbReference>
<dbReference type="GeneID" id="200931"/>
<dbReference type="KEGG" id="hsa:200931"/>
<dbReference type="MANE-Select" id="ENST00000296327.10">
    <property type="protein sequence ID" value="ENSP00000296327.5"/>
    <property type="RefSeq nucleotide sequence ID" value="NM_152672.6"/>
    <property type="RefSeq protein sequence ID" value="NP_689885.4"/>
</dbReference>
<dbReference type="UCSC" id="uc003fwd.4">
    <property type="organism name" value="human"/>
</dbReference>
<dbReference type="AGR" id="HGNC:29955"/>
<dbReference type="CTD" id="200931"/>
<dbReference type="DisGeNET" id="200931"/>
<dbReference type="GeneCards" id="SLC51A"/>
<dbReference type="HGNC" id="HGNC:29955">
    <property type="gene designation" value="SLC51A"/>
</dbReference>
<dbReference type="HPA" id="ENSG00000163959">
    <property type="expression patterns" value="Group enriched (intestine, liver)"/>
</dbReference>
<dbReference type="MalaCards" id="SLC51A"/>
<dbReference type="MIM" id="612084">
    <property type="type" value="gene"/>
</dbReference>
<dbReference type="MIM" id="619484">
    <property type="type" value="phenotype"/>
</dbReference>
<dbReference type="neXtProt" id="NX_Q86UW1"/>
<dbReference type="OpenTargets" id="ENSG00000163959"/>
<dbReference type="VEuPathDB" id="HostDB:ENSG00000163959"/>
<dbReference type="eggNOG" id="ENOG502R3BX">
    <property type="taxonomic scope" value="Eukaryota"/>
</dbReference>
<dbReference type="GeneTree" id="ENSGT00940000160780"/>
<dbReference type="HOGENOM" id="CLU_054316_0_0_1"/>
<dbReference type="InParanoid" id="Q86UW1"/>
<dbReference type="OMA" id="IWISGAS"/>
<dbReference type="OrthoDB" id="5832279at2759"/>
<dbReference type="PAN-GO" id="Q86UW1">
    <property type="GO annotations" value="5 GO annotations based on evolutionary models"/>
</dbReference>
<dbReference type="PhylomeDB" id="Q86UW1"/>
<dbReference type="PathwayCommons" id="Q86UW1"/>
<dbReference type="Reactome" id="R-HSA-159418">
    <property type="pathway name" value="Recycling of bile acids and salts"/>
</dbReference>
<dbReference type="SignaLink" id="Q86UW1"/>
<dbReference type="BioGRID-ORCS" id="200931">
    <property type="hits" value="15 hits in 1145 CRISPR screens"/>
</dbReference>
<dbReference type="GeneWiki" id="OSTalpha"/>
<dbReference type="GenomeRNAi" id="200931"/>
<dbReference type="Pharos" id="Q86UW1">
    <property type="development level" value="Tbio"/>
</dbReference>
<dbReference type="PRO" id="PR:Q86UW1"/>
<dbReference type="Proteomes" id="UP000005640">
    <property type="component" value="Chromosome 3"/>
</dbReference>
<dbReference type="RNAct" id="Q86UW1">
    <property type="molecule type" value="protein"/>
</dbReference>
<dbReference type="Bgee" id="ENSG00000163959">
    <property type="expression patterns" value="Expressed in ileal mucosa and 108 other cell types or tissues"/>
</dbReference>
<dbReference type="ExpressionAtlas" id="Q86UW1">
    <property type="expression patterns" value="baseline and differential"/>
</dbReference>
<dbReference type="GO" id="GO:0016323">
    <property type="term" value="C:basolateral plasma membrane"/>
    <property type="evidence" value="ECO:0000314"/>
    <property type="project" value="UniProtKB"/>
</dbReference>
<dbReference type="GO" id="GO:0005789">
    <property type="term" value="C:endoplasmic reticulum membrane"/>
    <property type="evidence" value="ECO:0000250"/>
    <property type="project" value="UniProtKB"/>
</dbReference>
<dbReference type="GO" id="GO:0016020">
    <property type="term" value="C:membrane"/>
    <property type="evidence" value="ECO:0000250"/>
    <property type="project" value="UniProtKB"/>
</dbReference>
<dbReference type="GO" id="GO:0005886">
    <property type="term" value="C:plasma membrane"/>
    <property type="evidence" value="ECO:0000314"/>
    <property type="project" value="MGI"/>
</dbReference>
<dbReference type="GO" id="GO:0032991">
    <property type="term" value="C:protein-containing complex"/>
    <property type="evidence" value="ECO:0000250"/>
    <property type="project" value="UniProtKB"/>
</dbReference>
<dbReference type="GO" id="GO:0015125">
    <property type="term" value="F:bile acid transmembrane transporter activity"/>
    <property type="evidence" value="ECO:0007669"/>
    <property type="project" value="Ensembl"/>
</dbReference>
<dbReference type="GO" id="GO:0046982">
    <property type="term" value="F:protein heterodimerization activity"/>
    <property type="evidence" value="ECO:0000250"/>
    <property type="project" value="UniProtKB"/>
</dbReference>
<dbReference type="GO" id="GO:0042803">
    <property type="term" value="F:protein homodimerization activity"/>
    <property type="evidence" value="ECO:0000250"/>
    <property type="project" value="UniProtKB"/>
</dbReference>
<dbReference type="GO" id="GO:0022857">
    <property type="term" value="F:transmembrane transporter activity"/>
    <property type="evidence" value="ECO:0000318"/>
    <property type="project" value="GO_Central"/>
</dbReference>
<dbReference type="GO" id="GO:0015721">
    <property type="term" value="P:bile acid and bile salt transport"/>
    <property type="evidence" value="ECO:0000250"/>
    <property type="project" value="UniProtKB"/>
</dbReference>
<dbReference type="GO" id="GO:0032782">
    <property type="term" value="P:bile acid secretion"/>
    <property type="evidence" value="ECO:0000353"/>
    <property type="project" value="UniProtKB"/>
</dbReference>
<dbReference type="InterPro" id="IPR005178">
    <property type="entry name" value="Ostalpha/TMEM184C"/>
</dbReference>
<dbReference type="PANTHER" id="PTHR23423">
    <property type="entry name" value="ORGANIC SOLUTE TRANSPORTER-RELATED"/>
    <property type="match status" value="1"/>
</dbReference>
<dbReference type="Pfam" id="PF03619">
    <property type="entry name" value="Solute_trans_a"/>
    <property type="match status" value="1"/>
</dbReference>
<dbReference type="SMART" id="SM01417">
    <property type="entry name" value="Solute_trans_a"/>
    <property type="match status" value="1"/>
</dbReference>
<feature type="chain" id="PRO_0000331543" description="Organic solute transporter subunit alpha">
    <location>
        <begin position="1"/>
        <end position="340"/>
    </location>
</feature>
<feature type="topological domain" description="Extracellular" evidence="4">
    <location>
        <begin position="1"/>
        <end position="48"/>
    </location>
</feature>
<feature type="transmembrane region" description="Helical" evidence="4">
    <location>
        <begin position="49"/>
        <end position="69"/>
    </location>
</feature>
<feature type="topological domain" description="Cytoplasmic" evidence="4">
    <location>
        <begin position="70"/>
        <end position="87"/>
    </location>
</feature>
<feature type="transmembrane region" description="Helical" evidence="4">
    <location>
        <begin position="88"/>
        <end position="108"/>
    </location>
</feature>
<feature type="topological domain" description="Extracellular" evidence="4">
    <location>
        <begin position="109"/>
        <end position="118"/>
    </location>
</feature>
<feature type="transmembrane region" description="Helical" evidence="4">
    <location>
        <begin position="119"/>
        <end position="139"/>
    </location>
</feature>
<feature type="topological domain" description="Cytoplasmic" evidence="4">
    <location>
        <begin position="140"/>
        <end position="181"/>
    </location>
</feature>
<feature type="transmembrane region" description="Helical" evidence="4">
    <location>
        <begin position="182"/>
        <end position="202"/>
    </location>
</feature>
<feature type="topological domain" description="Extracellular" evidence="4">
    <location>
        <begin position="203"/>
        <end position="218"/>
    </location>
</feature>
<feature type="transmembrane region" description="Helical" evidence="4">
    <location>
        <begin position="219"/>
        <end position="239"/>
    </location>
</feature>
<feature type="topological domain" description="Cytoplasmic" evidence="4">
    <location>
        <begin position="240"/>
        <end position="255"/>
    </location>
</feature>
<feature type="transmembrane region" description="Helical" evidence="4">
    <location>
        <begin position="256"/>
        <end position="276"/>
    </location>
</feature>
<feature type="topological domain" description="Extracellular" evidence="4">
    <location>
        <begin position="277"/>
        <end position="294"/>
    </location>
</feature>
<feature type="transmembrane region" description="Helical" evidence="4">
    <location>
        <begin position="295"/>
        <end position="317"/>
    </location>
</feature>
<feature type="topological domain" description="Cytoplasmic" evidence="4">
    <location>
        <begin position="318"/>
        <end position="340"/>
    </location>
</feature>
<feature type="modified residue" description="Phosphoserine" evidence="2">
    <location>
        <position position="330"/>
    </location>
</feature>
<feature type="sequence variant" id="VAR_086189" description="In PFIC6; loss of expression in the colon of a homozygous patient." evidence="10">
    <location>
        <begin position="186"/>
        <end position="340"/>
    </location>
</feature>
<feature type="sequence variant" id="VAR_042895" description="In dbSNP:rs939885." evidence="6">
    <original>V</original>
    <variation>I</variation>
    <location>
        <position position="202"/>
    </location>
</feature>
<proteinExistence type="evidence at protein level"/>
<evidence type="ECO:0000250" key="1"/>
<evidence type="ECO:0000250" key="2">
    <source>
        <dbReference type="UniProtKB" id="Q8R000"/>
    </source>
</evidence>
<evidence type="ECO:0000250" key="3">
    <source>
        <dbReference type="UniProtKB" id="Q90YM5"/>
    </source>
</evidence>
<evidence type="ECO:0000255" key="4"/>
<evidence type="ECO:0000269" key="5">
    <source>
    </source>
</evidence>
<evidence type="ECO:0000269" key="6">
    <source>
    </source>
</evidence>
<evidence type="ECO:0000269" key="7">
    <source>
    </source>
</evidence>
<evidence type="ECO:0000269" key="8">
    <source>
    </source>
</evidence>
<evidence type="ECO:0000269" key="9">
    <source>
    </source>
</evidence>
<evidence type="ECO:0000269" key="10">
    <source>
    </source>
</evidence>
<evidence type="ECO:0000303" key="11">
    <source>
    </source>
</evidence>
<evidence type="ECO:0000305" key="12"/>
<sequence length="340" mass="37735">MEPGRTQIKLDPRYTADLLEVLKTNYGIPSACFSQPPTAAQLLRALGPVELALTSILTLLALGSIAIFLEDAVYLYKNTLCPIKRRTLLWKSSAPTVVSVLCCFGLWIPRSLVLVEMTITSFYAVCFYLLMLVMVEGFGGKEAVLRTLRDTPMMVHTGPCCCCCPCCPRLLLTRKKLQLLMLGPFQYAFLKITLTLVGLFLVPDGIYDPADISEGSTALWINTFLGVSTLLALWTLGIISRQARLHLGEQNMGAKFALFQVLLILTALQPSIFSVLANGGQIACSPPYSSKTRSQVMNCHLLILETFLMTVLTRMYYRRKDHKVGYETFSSPDLDLNLKA</sequence>
<protein>
    <recommendedName>
        <fullName evidence="11">Organic solute transporter subunit alpha</fullName>
        <shortName evidence="11">OST-alpha</shortName>
    </recommendedName>
    <alternativeName>
        <fullName>Solute carrier family 51 subunit alpha</fullName>
    </alternativeName>
</protein>